<evidence type="ECO:0000255" key="1">
    <source>
        <dbReference type="HAMAP-Rule" id="MF_00484"/>
    </source>
</evidence>
<organism>
    <name type="scientific">Chlorobaculum parvum (strain DSM 263 / NCIMB 8327)</name>
    <name type="common">Chlorobium vibrioforme subsp. thiosulfatophilum</name>
    <dbReference type="NCBI Taxonomy" id="517417"/>
    <lineage>
        <taxon>Bacteria</taxon>
        <taxon>Pseudomonadati</taxon>
        <taxon>Chlorobiota</taxon>
        <taxon>Chlorobiia</taxon>
        <taxon>Chlorobiales</taxon>
        <taxon>Chlorobiaceae</taxon>
        <taxon>Chlorobaculum</taxon>
    </lineage>
</organism>
<accession>B3QR00</accession>
<proteinExistence type="inferred from homology"/>
<name>GLGA_CHLP8</name>
<dbReference type="EC" id="2.4.1.21" evidence="1"/>
<dbReference type="EMBL" id="CP001099">
    <property type="protein sequence ID" value="ACF10654.1"/>
    <property type="molecule type" value="Genomic_DNA"/>
</dbReference>
<dbReference type="RefSeq" id="WP_012501488.1">
    <property type="nucleotide sequence ID" value="NC_011027.1"/>
</dbReference>
<dbReference type="SMR" id="B3QR00"/>
<dbReference type="STRING" id="517417.Cpar_0227"/>
<dbReference type="CAZy" id="GT5">
    <property type="family name" value="Glycosyltransferase Family 5"/>
</dbReference>
<dbReference type="KEGG" id="cpc:Cpar_0227"/>
<dbReference type="eggNOG" id="COG0297">
    <property type="taxonomic scope" value="Bacteria"/>
</dbReference>
<dbReference type="HOGENOM" id="CLU_009583_18_0_10"/>
<dbReference type="OrthoDB" id="9808590at2"/>
<dbReference type="UniPathway" id="UPA00164"/>
<dbReference type="Proteomes" id="UP000008811">
    <property type="component" value="Chromosome"/>
</dbReference>
<dbReference type="GO" id="GO:0009011">
    <property type="term" value="F:alpha-1,4-glucan glucosyltransferase (ADP-glucose donor) activity"/>
    <property type="evidence" value="ECO:0007669"/>
    <property type="project" value="UniProtKB-UniRule"/>
</dbReference>
<dbReference type="GO" id="GO:0004373">
    <property type="term" value="F:alpha-1,4-glucan glucosyltransferase (UDP-glucose donor) activity"/>
    <property type="evidence" value="ECO:0007669"/>
    <property type="project" value="InterPro"/>
</dbReference>
<dbReference type="GO" id="GO:0005978">
    <property type="term" value="P:glycogen biosynthetic process"/>
    <property type="evidence" value="ECO:0007669"/>
    <property type="project" value="UniProtKB-UniRule"/>
</dbReference>
<dbReference type="CDD" id="cd03791">
    <property type="entry name" value="GT5_Glycogen_synthase_DULL1-like"/>
    <property type="match status" value="1"/>
</dbReference>
<dbReference type="Gene3D" id="3.40.50.2000">
    <property type="entry name" value="Glycogen Phosphorylase B"/>
    <property type="match status" value="2"/>
</dbReference>
<dbReference type="HAMAP" id="MF_00484">
    <property type="entry name" value="Glycogen_synth"/>
    <property type="match status" value="1"/>
</dbReference>
<dbReference type="InterPro" id="IPR001296">
    <property type="entry name" value="Glyco_trans_1"/>
</dbReference>
<dbReference type="InterPro" id="IPR011835">
    <property type="entry name" value="GS/SS"/>
</dbReference>
<dbReference type="InterPro" id="IPR013534">
    <property type="entry name" value="Starch_synth_cat_dom"/>
</dbReference>
<dbReference type="NCBIfam" id="TIGR02095">
    <property type="entry name" value="glgA"/>
    <property type="match status" value="1"/>
</dbReference>
<dbReference type="NCBIfam" id="NF010698">
    <property type="entry name" value="PRK14098.1"/>
    <property type="match status" value="1"/>
</dbReference>
<dbReference type="PANTHER" id="PTHR45825:SF11">
    <property type="entry name" value="ALPHA AMYLASE DOMAIN-CONTAINING PROTEIN"/>
    <property type="match status" value="1"/>
</dbReference>
<dbReference type="PANTHER" id="PTHR45825">
    <property type="entry name" value="GRANULE-BOUND STARCH SYNTHASE 1, CHLOROPLASTIC/AMYLOPLASTIC"/>
    <property type="match status" value="1"/>
</dbReference>
<dbReference type="Pfam" id="PF08323">
    <property type="entry name" value="Glyco_transf_5"/>
    <property type="match status" value="1"/>
</dbReference>
<dbReference type="Pfam" id="PF00534">
    <property type="entry name" value="Glycos_transf_1"/>
    <property type="match status" value="1"/>
</dbReference>
<dbReference type="SUPFAM" id="SSF53756">
    <property type="entry name" value="UDP-Glycosyltransferase/glycogen phosphorylase"/>
    <property type="match status" value="1"/>
</dbReference>
<reference key="1">
    <citation type="submission" date="2008-06" db="EMBL/GenBank/DDBJ databases">
        <title>Complete sequence of Chlorobaculum parvum NCIB 8327.</title>
        <authorList>
            <consortium name="US DOE Joint Genome Institute"/>
            <person name="Lucas S."/>
            <person name="Copeland A."/>
            <person name="Lapidus A."/>
            <person name="Glavina del Rio T."/>
            <person name="Dalin E."/>
            <person name="Tice H."/>
            <person name="Bruce D."/>
            <person name="Goodwin L."/>
            <person name="Pitluck S."/>
            <person name="Schmutz J."/>
            <person name="Larimer F."/>
            <person name="Land M."/>
            <person name="Hauser L."/>
            <person name="Kyrpides N."/>
            <person name="Mikhailova N."/>
            <person name="Zhao F."/>
            <person name="Li T."/>
            <person name="Liu Z."/>
            <person name="Overmann J."/>
            <person name="Bryant D.A."/>
            <person name="Richardson P."/>
        </authorList>
    </citation>
    <scope>NUCLEOTIDE SEQUENCE [LARGE SCALE GENOMIC DNA]</scope>
    <source>
        <strain>DSM 263 / NCIMB 8327</strain>
    </source>
</reference>
<sequence>MARRNYKVLYVSGEVSPFVRVSSLADFMASFPQALEEEGFEARIMMPKYGIINDRKFRLHDVLRLSDIEVPLKEKTEMLHVKVTALPSSKIQTYFLYNEKHFKRSGLFSDLQLGGDHKGSAEKLIFFSVGVMETLVRLGWQPDIIHCNDWHAGLVPLLARTRYAKHDFFKKVKIVQSVHNVYRQGVFQPKMFQKHLDPEVFDGLEREGDDINLLATGIKYADLVTTTSPSYAKQIASDPESSFGMDKALKACKDRFHGILNGMDTRQWNPSSDKLIKKRYSAAQPELKLEDKKVLLEEVGLPFSEETPVVGVITTFDDVQGMGLLKESLSKLLELDLQLIVSGSGNKEFEQELRDLVEEHPEKLAVNTDFTDAFYHQMIAGLDMLIMPSRIESCGMKQMFAMNYGTVPIAYAGGGIVETIEEVSGDKGTGFVFTDYTAEALTAKLGEALSMFDDKERWAELMREGMERDFSWSASAEQYAELYREILG</sequence>
<feature type="chain" id="PRO_1000126058" description="Glycogen synthase">
    <location>
        <begin position="1"/>
        <end position="488"/>
    </location>
</feature>
<feature type="binding site" evidence="1">
    <location>
        <position position="20"/>
    </location>
    <ligand>
        <name>ADP-alpha-D-glucose</name>
        <dbReference type="ChEBI" id="CHEBI:57498"/>
    </ligand>
</feature>
<keyword id="KW-0320">Glycogen biosynthesis</keyword>
<keyword id="KW-0328">Glycosyltransferase</keyword>
<keyword id="KW-0808">Transferase</keyword>
<protein>
    <recommendedName>
        <fullName evidence="1">Glycogen synthase</fullName>
        <ecNumber evidence="1">2.4.1.21</ecNumber>
    </recommendedName>
    <alternativeName>
        <fullName evidence="1">Starch [bacterial glycogen] synthase</fullName>
    </alternativeName>
</protein>
<gene>
    <name evidence="1" type="primary">glgA</name>
    <name type="ordered locus">Cpar_0227</name>
</gene>
<comment type="function">
    <text evidence="1">Synthesizes alpha-1,4-glucan chains using ADP-glucose.</text>
</comment>
<comment type="catalytic activity">
    <reaction evidence="1">
        <text>[(1-&gt;4)-alpha-D-glucosyl](n) + ADP-alpha-D-glucose = [(1-&gt;4)-alpha-D-glucosyl](n+1) + ADP + H(+)</text>
        <dbReference type="Rhea" id="RHEA:18189"/>
        <dbReference type="Rhea" id="RHEA-COMP:9584"/>
        <dbReference type="Rhea" id="RHEA-COMP:9587"/>
        <dbReference type="ChEBI" id="CHEBI:15378"/>
        <dbReference type="ChEBI" id="CHEBI:15444"/>
        <dbReference type="ChEBI" id="CHEBI:57498"/>
        <dbReference type="ChEBI" id="CHEBI:456216"/>
        <dbReference type="EC" id="2.4.1.21"/>
    </reaction>
</comment>
<comment type="pathway">
    <text evidence="1">Glycan biosynthesis; glycogen biosynthesis.</text>
</comment>
<comment type="similarity">
    <text evidence="1">Belongs to the glycosyltransferase 1 family. Bacterial/plant glycogen synthase subfamily.</text>
</comment>